<reference key="1">
    <citation type="journal article" date="2005" name="Genome Res.">
        <title>Comparative and functional genomic analyses of the pathogenicity of phytopathogen Xanthomonas campestris pv. campestris.</title>
        <authorList>
            <person name="Qian W."/>
            <person name="Jia Y."/>
            <person name="Ren S.-X."/>
            <person name="He Y.-Q."/>
            <person name="Feng J.-X."/>
            <person name="Lu L.-F."/>
            <person name="Sun Q."/>
            <person name="Ying G."/>
            <person name="Tang D.-J."/>
            <person name="Tang H."/>
            <person name="Wu W."/>
            <person name="Hao P."/>
            <person name="Wang L."/>
            <person name="Jiang B.-L."/>
            <person name="Zeng S."/>
            <person name="Gu W.-Y."/>
            <person name="Lu G."/>
            <person name="Rong L."/>
            <person name="Tian Y."/>
            <person name="Yao Z."/>
            <person name="Fu G."/>
            <person name="Chen B."/>
            <person name="Fang R."/>
            <person name="Qiang B."/>
            <person name="Chen Z."/>
            <person name="Zhao G.-P."/>
            <person name="Tang J.-L."/>
            <person name="He C."/>
        </authorList>
    </citation>
    <scope>NUCLEOTIDE SEQUENCE [LARGE SCALE GENOMIC DNA]</scope>
    <source>
        <strain>8004</strain>
    </source>
</reference>
<evidence type="ECO:0000255" key="1">
    <source>
        <dbReference type="HAMAP-Rule" id="MF_00033"/>
    </source>
</evidence>
<evidence type="ECO:0000256" key="2">
    <source>
        <dbReference type="SAM" id="MobiDB-lite"/>
    </source>
</evidence>
<comment type="function">
    <text evidence="1">Cell wall formation. Catalyzes the transfer of a GlcNAc subunit on undecaprenyl-pyrophosphoryl-MurNAc-pentapeptide (lipid intermediate I) to form undecaprenyl-pyrophosphoryl-MurNAc-(pentapeptide)GlcNAc (lipid intermediate II).</text>
</comment>
<comment type="catalytic activity">
    <reaction evidence="1">
        <text>di-trans,octa-cis-undecaprenyl diphospho-N-acetyl-alpha-D-muramoyl-L-alanyl-D-glutamyl-meso-2,6-diaminopimeloyl-D-alanyl-D-alanine + UDP-N-acetyl-alpha-D-glucosamine = di-trans,octa-cis-undecaprenyl diphospho-[N-acetyl-alpha-D-glucosaminyl-(1-&gt;4)]-N-acetyl-alpha-D-muramoyl-L-alanyl-D-glutamyl-meso-2,6-diaminopimeloyl-D-alanyl-D-alanine + UDP + H(+)</text>
        <dbReference type="Rhea" id="RHEA:31227"/>
        <dbReference type="ChEBI" id="CHEBI:15378"/>
        <dbReference type="ChEBI" id="CHEBI:57705"/>
        <dbReference type="ChEBI" id="CHEBI:58223"/>
        <dbReference type="ChEBI" id="CHEBI:61387"/>
        <dbReference type="ChEBI" id="CHEBI:61388"/>
        <dbReference type="EC" id="2.4.1.227"/>
    </reaction>
</comment>
<comment type="pathway">
    <text evidence="1">Cell wall biogenesis; peptidoglycan biosynthesis.</text>
</comment>
<comment type="subcellular location">
    <subcellularLocation>
        <location evidence="1">Cell inner membrane</location>
        <topology evidence="1">Peripheral membrane protein</topology>
        <orientation evidence="1">Cytoplasmic side</orientation>
    </subcellularLocation>
</comment>
<comment type="similarity">
    <text evidence="1">Belongs to the glycosyltransferase 28 family. MurG subfamily.</text>
</comment>
<gene>
    <name evidence="1" type="primary">murG</name>
    <name type="ordered locus">XC_3510</name>
</gene>
<keyword id="KW-0131">Cell cycle</keyword>
<keyword id="KW-0132">Cell division</keyword>
<keyword id="KW-0997">Cell inner membrane</keyword>
<keyword id="KW-1003">Cell membrane</keyword>
<keyword id="KW-0133">Cell shape</keyword>
<keyword id="KW-0961">Cell wall biogenesis/degradation</keyword>
<keyword id="KW-0328">Glycosyltransferase</keyword>
<keyword id="KW-0472">Membrane</keyword>
<keyword id="KW-0573">Peptidoglycan synthesis</keyword>
<keyword id="KW-0808">Transferase</keyword>
<dbReference type="EC" id="2.4.1.227" evidence="1"/>
<dbReference type="EMBL" id="CP000050">
    <property type="protein sequence ID" value="AAY50553.1"/>
    <property type="molecule type" value="Genomic_DNA"/>
</dbReference>
<dbReference type="SMR" id="Q4UQX0"/>
<dbReference type="CAZy" id="GT28">
    <property type="family name" value="Glycosyltransferase Family 28"/>
</dbReference>
<dbReference type="KEGG" id="xcb:XC_3510"/>
<dbReference type="HOGENOM" id="CLU_037404_2_0_6"/>
<dbReference type="UniPathway" id="UPA00219"/>
<dbReference type="Proteomes" id="UP000000420">
    <property type="component" value="Chromosome"/>
</dbReference>
<dbReference type="GO" id="GO:0005886">
    <property type="term" value="C:plasma membrane"/>
    <property type="evidence" value="ECO:0007669"/>
    <property type="project" value="UniProtKB-SubCell"/>
</dbReference>
<dbReference type="GO" id="GO:0051991">
    <property type="term" value="F:UDP-N-acetyl-D-glucosamine:N-acetylmuramoyl-L-alanyl-D-glutamyl-meso-2,6-diaminopimelyl-D-alanyl-D-alanine-diphosphoundecaprenol 4-beta-N-acetylglucosaminlytransferase activity"/>
    <property type="evidence" value="ECO:0007669"/>
    <property type="project" value="RHEA"/>
</dbReference>
<dbReference type="GO" id="GO:0050511">
    <property type="term" value="F:undecaprenyldiphospho-muramoylpentapeptide beta-N-acetylglucosaminyltransferase activity"/>
    <property type="evidence" value="ECO:0007669"/>
    <property type="project" value="UniProtKB-UniRule"/>
</dbReference>
<dbReference type="GO" id="GO:0005975">
    <property type="term" value="P:carbohydrate metabolic process"/>
    <property type="evidence" value="ECO:0007669"/>
    <property type="project" value="InterPro"/>
</dbReference>
<dbReference type="GO" id="GO:0051301">
    <property type="term" value="P:cell division"/>
    <property type="evidence" value="ECO:0007669"/>
    <property type="project" value="UniProtKB-KW"/>
</dbReference>
<dbReference type="GO" id="GO:0071555">
    <property type="term" value="P:cell wall organization"/>
    <property type="evidence" value="ECO:0007669"/>
    <property type="project" value="UniProtKB-KW"/>
</dbReference>
<dbReference type="GO" id="GO:0030259">
    <property type="term" value="P:lipid glycosylation"/>
    <property type="evidence" value="ECO:0007669"/>
    <property type="project" value="UniProtKB-UniRule"/>
</dbReference>
<dbReference type="GO" id="GO:0009252">
    <property type="term" value="P:peptidoglycan biosynthetic process"/>
    <property type="evidence" value="ECO:0007669"/>
    <property type="project" value="UniProtKB-UniRule"/>
</dbReference>
<dbReference type="GO" id="GO:0008360">
    <property type="term" value="P:regulation of cell shape"/>
    <property type="evidence" value="ECO:0007669"/>
    <property type="project" value="UniProtKB-KW"/>
</dbReference>
<dbReference type="CDD" id="cd03785">
    <property type="entry name" value="GT28_MurG"/>
    <property type="match status" value="1"/>
</dbReference>
<dbReference type="Gene3D" id="3.40.50.2000">
    <property type="entry name" value="Glycogen Phosphorylase B"/>
    <property type="match status" value="2"/>
</dbReference>
<dbReference type="HAMAP" id="MF_00033">
    <property type="entry name" value="MurG"/>
    <property type="match status" value="1"/>
</dbReference>
<dbReference type="InterPro" id="IPR006009">
    <property type="entry name" value="GlcNAc_MurG"/>
</dbReference>
<dbReference type="InterPro" id="IPR007235">
    <property type="entry name" value="Glyco_trans_28_C"/>
</dbReference>
<dbReference type="InterPro" id="IPR004276">
    <property type="entry name" value="GlycoTrans_28_N"/>
</dbReference>
<dbReference type="NCBIfam" id="TIGR01133">
    <property type="entry name" value="murG"/>
    <property type="match status" value="1"/>
</dbReference>
<dbReference type="PANTHER" id="PTHR21015:SF22">
    <property type="entry name" value="GLYCOSYLTRANSFERASE"/>
    <property type="match status" value="1"/>
</dbReference>
<dbReference type="PANTHER" id="PTHR21015">
    <property type="entry name" value="UDP-N-ACETYLGLUCOSAMINE--N-ACETYLMURAMYL-(PENTAPEPTIDE) PYROPHOSPHORYL-UNDECAPRENOL N-ACETYLGLUCOSAMINE TRANSFERASE 1"/>
    <property type="match status" value="1"/>
</dbReference>
<dbReference type="Pfam" id="PF04101">
    <property type="entry name" value="Glyco_tran_28_C"/>
    <property type="match status" value="1"/>
</dbReference>
<dbReference type="Pfam" id="PF03033">
    <property type="entry name" value="Glyco_transf_28"/>
    <property type="match status" value="1"/>
</dbReference>
<dbReference type="SUPFAM" id="SSF53756">
    <property type="entry name" value="UDP-Glycosyltransferase/glycogen phosphorylase"/>
    <property type="match status" value="1"/>
</dbReference>
<accession>Q4UQX0</accession>
<sequence>MSVEHATPVQQPAHAAASVRPVMILAGGTGGHIFPGLAVAKVLRARGVPVTWLGADGAMETRLVPQHAIQIDTLAISGLRGKGIVKLLGAPVRVMRAVRAAGFVLRKRQPRAVISFGGFAAGPGGLAARLLGVPLLVHEQNRAPGMTNKVLSRFARRVLTGFPGSFAGEEAVGNPVREEIAALPAPATRLVGRGGPVRLLVLGGSQGARALNNAVPAALAALGHPAVDVRHQCGEKLRAEAEAAYAQAAVNASVEPFIADMAAAYAWADLVVCRAGASTLAEVCAAGVGSVLVPFAAAVDDHQTRNAEYLVSAEAAVLLKQDDTLAVRLQQVLQTLLADPARRLAMAQAARTLAKPDAAERIADIILQEAGNGKSGMGNGQSAEQLQEHTVIHQNKRTDQALDAASASLHPIPDSRFPIRTSAGGAQ</sequence>
<proteinExistence type="inferred from homology"/>
<protein>
    <recommendedName>
        <fullName evidence="1">UDP-N-acetylglucosamine--N-acetylmuramyl-(pentapeptide) pyrophosphoryl-undecaprenol N-acetylglucosamine transferase</fullName>
        <ecNumber evidence="1">2.4.1.227</ecNumber>
    </recommendedName>
    <alternativeName>
        <fullName evidence="1">Undecaprenyl-PP-MurNAc-pentapeptide-UDPGlcNAc GlcNAc transferase</fullName>
    </alternativeName>
</protein>
<feature type="chain" id="PRO_0000225113" description="UDP-N-acetylglucosamine--N-acetylmuramyl-(pentapeptide) pyrophosphoryl-undecaprenol N-acetylglucosamine transferase">
    <location>
        <begin position="1"/>
        <end position="427"/>
    </location>
</feature>
<feature type="region of interest" description="Disordered" evidence="2">
    <location>
        <begin position="408"/>
        <end position="427"/>
    </location>
</feature>
<feature type="binding site" evidence="1">
    <location>
        <begin position="29"/>
        <end position="31"/>
    </location>
    <ligand>
        <name>UDP-N-acetyl-alpha-D-glucosamine</name>
        <dbReference type="ChEBI" id="CHEBI:57705"/>
    </ligand>
</feature>
<feature type="binding site" evidence="1">
    <location>
        <position position="141"/>
    </location>
    <ligand>
        <name>UDP-N-acetyl-alpha-D-glucosamine</name>
        <dbReference type="ChEBI" id="CHEBI:57705"/>
    </ligand>
</feature>
<feature type="binding site" evidence="1">
    <location>
        <position position="177"/>
    </location>
    <ligand>
        <name>UDP-N-acetyl-alpha-D-glucosamine</name>
        <dbReference type="ChEBI" id="CHEBI:57705"/>
    </ligand>
</feature>
<feature type="binding site" evidence="1">
    <location>
        <position position="205"/>
    </location>
    <ligand>
        <name>UDP-N-acetyl-alpha-D-glucosamine</name>
        <dbReference type="ChEBI" id="CHEBI:57705"/>
    </ligand>
</feature>
<feature type="binding site" evidence="1">
    <location>
        <position position="258"/>
    </location>
    <ligand>
        <name>UDP-N-acetyl-alpha-D-glucosamine</name>
        <dbReference type="ChEBI" id="CHEBI:57705"/>
    </ligand>
</feature>
<feature type="binding site" evidence="1">
    <location>
        <position position="303"/>
    </location>
    <ligand>
        <name>UDP-N-acetyl-alpha-D-glucosamine</name>
        <dbReference type="ChEBI" id="CHEBI:57705"/>
    </ligand>
</feature>
<organism>
    <name type="scientific">Xanthomonas campestris pv. campestris (strain 8004)</name>
    <dbReference type="NCBI Taxonomy" id="314565"/>
    <lineage>
        <taxon>Bacteria</taxon>
        <taxon>Pseudomonadati</taxon>
        <taxon>Pseudomonadota</taxon>
        <taxon>Gammaproteobacteria</taxon>
        <taxon>Lysobacterales</taxon>
        <taxon>Lysobacteraceae</taxon>
        <taxon>Xanthomonas</taxon>
    </lineage>
</organism>
<name>MURG_XANC8</name>